<name>YBEY_ERYLH</name>
<reference key="1">
    <citation type="journal article" date="2009" name="J. Bacteriol.">
        <title>Complete genome sequence of Erythrobacter litoralis HTCC2594.</title>
        <authorList>
            <person name="Oh H.M."/>
            <person name="Giovannoni S.J."/>
            <person name="Ferriera S."/>
            <person name="Johnson J."/>
            <person name="Cho J.C."/>
        </authorList>
    </citation>
    <scope>NUCLEOTIDE SEQUENCE [LARGE SCALE GENOMIC DNA]</scope>
    <source>
        <strain>HTCC2594</strain>
    </source>
</reference>
<sequence length="161" mass="17889">MKLEIEIEHWPDGEWESITGGAAKATRDVEPALAHARLETSVLFTSDEQVHVLNREWRERDKPTNVLSFPMLDRDRLRALEPEGPPEMLGDIALAYETCAREAEEKGISLEAHATHLIVHGLLHLAGHDHVDSDAQAEEMEALEIAALAKLGIADPYGDRT</sequence>
<proteinExistence type="inferred from homology"/>
<comment type="function">
    <text evidence="1">Single strand-specific metallo-endoribonuclease involved in late-stage 70S ribosome quality control and in maturation of the 3' terminus of the 16S rRNA.</text>
</comment>
<comment type="cofactor">
    <cofactor evidence="1">
        <name>Zn(2+)</name>
        <dbReference type="ChEBI" id="CHEBI:29105"/>
    </cofactor>
    <text evidence="1">Binds 1 zinc ion.</text>
</comment>
<comment type="subcellular location">
    <subcellularLocation>
        <location evidence="1">Cytoplasm</location>
    </subcellularLocation>
</comment>
<comment type="similarity">
    <text evidence="1">Belongs to the endoribonuclease YbeY family.</text>
</comment>
<organism>
    <name type="scientific">Erythrobacter litoralis (strain HTCC2594)</name>
    <dbReference type="NCBI Taxonomy" id="314225"/>
    <lineage>
        <taxon>Bacteria</taxon>
        <taxon>Pseudomonadati</taxon>
        <taxon>Pseudomonadota</taxon>
        <taxon>Alphaproteobacteria</taxon>
        <taxon>Sphingomonadales</taxon>
        <taxon>Erythrobacteraceae</taxon>
        <taxon>Erythrobacter/Porphyrobacter group</taxon>
        <taxon>Erythrobacter</taxon>
    </lineage>
</organism>
<evidence type="ECO:0000255" key="1">
    <source>
        <dbReference type="HAMAP-Rule" id="MF_00009"/>
    </source>
</evidence>
<gene>
    <name evidence="1" type="primary">ybeY</name>
    <name type="ordered locus">ELI_08505</name>
</gene>
<dbReference type="EC" id="3.1.-.-" evidence="1"/>
<dbReference type="EMBL" id="CP000157">
    <property type="protein sequence ID" value="ABC63793.1"/>
    <property type="molecule type" value="Genomic_DNA"/>
</dbReference>
<dbReference type="RefSeq" id="WP_011414623.1">
    <property type="nucleotide sequence ID" value="NC_007722.1"/>
</dbReference>
<dbReference type="SMR" id="Q2N948"/>
<dbReference type="STRING" id="314225.ELI_08505"/>
<dbReference type="KEGG" id="eli:ELI_08505"/>
<dbReference type="eggNOG" id="COG0319">
    <property type="taxonomic scope" value="Bacteria"/>
</dbReference>
<dbReference type="HOGENOM" id="CLU_106710_0_0_5"/>
<dbReference type="OrthoDB" id="9807740at2"/>
<dbReference type="Proteomes" id="UP000008808">
    <property type="component" value="Chromosome"/>
</dbReference>
<dbReference type="GO" id="GO:0005737">
    <property type="term" value="C:cytoplasm"/>
    <property type="evidence" value="ECO:0007669"/>
    <property type="project" value="UniProtKB-SubCell"/>
</dbReference>
<dbReference type="GO" id="GO:0004222">
    <property type="term" value="F:metalloendopeptidase activity"/>
    <property type="evidence" value="ECO:0007669"/>
    <property type="project" value="InterPro"/>
</dbReference>
<dbReference type="GO" id="GO:0004521">
    <property type="term" value="F:RNA endonuclease activity"/>
    <property type="evidence" value="ECO:0007669"/>
    <property type="project" value="UniProtKB-UniRule"/>
</dbReference>
<dbReference type="GO" id="GO:0008270">
    <property type="term" value="F:zinc ion binding"/>
    <property type="evidence" value="ECO:0007669"/>
    <property type="project" value="UniProtKB-UniRule"/>
</dbReference>
<dbReference type="GO" id="GO:0006364">
    <property type="term" value="P:rRNA processing"/>
    <property type="evidence" value="ECO:0007669"/>
    <property type="project" value="UniProtKB-UniRule"/>
</dbReference>
<dbReference type="Gene3D" id="3.40.390.30">
    <property type="entry name" value="Metalloproteases ('zincins'), catalytic domain"/>
    <property type="match status" value="1"/>
</dbReference>
<dbReference type="HAMAP" id="MF_00009">
    <property type="entry name" value="Endoribonucl_YbeY"/>
    <property type="match status" value="1"/>
</dbReference>
<dbReference type="InterPro" id="IPR023091">
    <property type="entry name" value="MetalPrtase_cat_dom_sf_prd"/>
</dbReference>
<dbReference type="InterPro" id="IPR002036">
    <property type="entry name" value="YbeY"/>
</dbReference>
<dbReference type="InterPro" id="IPR020549">
    <property type="entry name" value="YbeY_CS"/>
</dbReference>
<dbReference type="NCBIfam" id="TIGR00043">
    <property type="entry name" value="rRNA maturation RNase YbeY"/>
    <property type="match status" value="1"/>
</dbReference>
<dbReference type="PANTHER" id="PTHR46986">
    <property type="entry name" value="ENDORIBONUCLEASE YBEY, CHLOROPLASTIC"/>
    <property type="match status" value="1"/>
</dbReference>
<dbReference type="PANTHER" id="PTHR46986:SF1">
    <property type="entry name" value="ENDORIBONUCLEASE YBEY, CHLOROPLASTIC"/>
    <property type="match status" value="1"/>
</dbReference>
<dbReference type="Pfam" id="PF02130">
    <property type="entry name" value="YbeY"/>
    <property type="match status" value="1"/>
</dbReference>
<dbReference type="SUPFAM" id="SSF55486">
    <property type="entry name" value="Metalloproteases ('zincins'), catalytic domain"/>
    <property type="match status" value="1"/>
</dbReference>
<dbReference type="PROSITE" id="PS01306">
    <property type="entry name" value="UPF0054"/>
    <property type="match status" value="1"/>
</dbReference>
<protein>
    <recommendedName>
        <fullName evidence="1">Endoribonuclease YbeY</fullName>
        <ecNumber evidence="1">3.1.-.-</ecNumber>
    </recommendedName>
</protein>
<accession>Q2N948</accession>
<keyword id="KW-0963">Cytoplasm</keyword>
<keyword id="KW-0255">Endonuclease</keyword>
<keyword id="KW-0378">Hydrolase</keyword>
<keyword id="KW-0479">Metal-binding</keyword>
<keyword id="KW-0540">Nuclease</keyword>
<keyword id="KW-1185">Reference proteome</keyword>
<keyword id="KW-0690">Ribosome biogenesis</keyword>
<keyword id="KW-0698">rRNA processing</keyword>
<keyword id="KW-0862">Zinc</keyword>
<feature type="chain" id="PRO_0000284203" description="Endoribonuclease YbeY">
    <location>
        <begin position="1"/>
        <end position="161"/>
    </location>
</feature>
<feature type="binding site" evidence="1">
    <location>
        <position position="120"/>
    </location>
    <ligand>
        <name>Zn(2+)</name>
        <dbReference type="ChEBI" id="CHEBI:29105"/>
        <note>catalytic</note>
    </ligand>
</feature>
<feature type="binding site" evidence="1">
    <location>
        <position position="124"/>
    </location>
    <ligand>
        <name>Zn(2+)</name>
        <dbReference type="ChEBI" id="CHEBI:29105"/>
        <note>catalytic</note>
    </ligand>
</feature>
<feature type="binding site" evidence="1">
    <location>
        <position position="130"/>
    </location>
    <ligand>
        <name>Zn(2+)</name>
        <dbReference type="ChEBI" id="CHEBI:29105"/>
        <note>catalytic</note>
    </ligand>
</feature>